<reference key="1">
    <citation type="journal article" date="2003" name="Nature">
        <title>Genome divergence in two Prochlorococcus ecotypes reflects oceanic niche differentiation.</title>
        <authorList>
            <person name="Rocap G."/>
            <person name="Larimer F.W."/>
            <person name="Lamerdin J.E."/>
            <person name="Malfatti S."/>
            <person name="Chain P."/>
            <person name="Ahlgren N.A."/>
            <person name="Arellano A."/>
            <person name="Coleman M."/>
            <person name="Hauser L."/>
            <person name="Hess W.R."/>
            <person name="Johnson Z.I."/>
            <person name="Land M.L."/>
            <person name="Lindell D."/>
            <person name="Post A.F."/>
            <person name="Regala W."/>
            <person name="Shah M."/>
            <person name="Shaw S.L."/>
            <person name="Steglich C."/>
            <person name="Sullivan M.B."/>
            <person name="Ting C.S."/>
            <person name="Tolonen A."/>
            <person name="Webb E.A."/>
            <person name="Zinser E.R."/>
            <person name="Chisholm S.W."/>
        </authorList>
    </citation>
    <scope>NUCLEOTIDE SEQUENCE [LARGE SCALE GENOMIC DNA]</scope>
    <source>
        <strain>MIT 9313</strain>
    </source>
</reference>
<proteinExistence type="inferred from homology"/>
<protein>
    <recommendedName>
        <fullName evidence="1">Small ribosomal subunit protein uS9</fullName>
    </recommendedName>
    <alternativeName>
        <fullName evidence="3">30S ribosomal protein S9</fullName>
    </alternativeName>
</protein>
<accession>Q7V520</accession>
<evidence type="ECO:0000255" key="1">
    <source>
        <dbReference type="HAMAP-Rule" id="MF_00532"/>
    </source>
</evidence>
<evidence type="ECO:0000256" key="2">
    <source>
        <dbReference type="SAM" id="MobiDB-lite"/>
    </source>
</evidence>
<evidence type="ECO:0000305" key="3"/>
<keyword id="KW-1185">Reference proteome</keyword>
<keyword id="KW-0687">Ribonucleoprotein</keyword>
<keyword id="KW-0689">Ribosomal protein</keyword>
<dbReference type="EMBL" id="BX548175">
    <property type="protein sequence ID" value="CAE21934.1"/>
    <property type="molecule type" value="Genomic_DNA"/>
</dbReference>
<dbReference type="RefSeq" id="WP_011131126.1">
    <property type="nucleotide sequence ID" value="NC_005071.1"/>
</dbReference>
<dbReference type="SMR" id="Q7V520"/>
<dbReference type="KEGG" id="pmt:PMT_1759"/>
<dbReference type="eggNOG" id="COG0103">
    <property type="taxonomic scope" value="Bacteria"/>
</dbReference>
<dbReference type="HOGENOM" id="CLU_046483_2_1_3"/>
<dbReference type="OrthoDB" id="9803965at2"/>
<dbReference type="Proteomes" id="UP000001423">
    <property type="component" value="Chromosome"/>
</dbReference>
<dbReference type="GO" id="GO:0022627">
    <property type="term" value="C:cytosolic small ribosomal subunit"/>
    <property type="evidence" value="ECO:0007669"/>
    <property type="project" value="TreeGrafter"/>
</dbReference>
<dbReference type="GO" id="GO:0003723">
    <property type="term" value="F:RNA binding"/>
    <property type="evidence" value="ECO:0007669"/>
    <property type="project" value="TreeGrafter"/>
</dbReference>
<dbReference type="GO" id="GO:0003735">
    <property type="term" value="F:structural constituent of ribosome"/>
    <property type="evidence" value="ECO:0007669"/>
    <property type="project" value="InterPro"/>
</dbReference>
<dbReference type="GO" id="GO:0006412">
    <property type="term" value="P:translation"/>
    <property type="evidence" value="ECO:0007669"/>
    <property type="project" value="UniProtKB-UniRule"/>
</dbReference>
<dbReference type="FunFam" id="3.30.230.10:FF:000001">
    <property type="entry name" value="30S ribosomal protein S9"/>
    <property type="match status" value="1"/>
</dbReference>
<dbReference type="Gene3D" id="3.30.230.10">
    <property type="match status" value="1"/>
</dbReference>
<dbReference type="HAMAP" id="MF_00532_B">
    <property type="entry name" value="Ribosomal_uS9_B"/>
    <property type="match status" value="1"/>
</dbReference>
<dbReference type="InterPro" id="IPR020568">
    <property type="entry name" value="Ribosomal_Su5_D2-typ_SF"/>
</dbReference>
<dbReference type="InterPro" id="IPR000754">
    <property type="entry name" value="Ribosomal_uS9"/>
</dbReference>
<dbReference type="InterPro" id="IPR023035">
    <property type="entry name" value="Ribosomal_uS9_bac/plastid"/>
</dbReference>
<dbReference type="InterPro" id="IPR020574">
    <property type="entry name" value="Ribosomal_uS9_CS"/>
</dbReference>
<dbReference type="InterPro" id="IPR014721">
    <property type="entry name" value="Ribsml_uS5_D2-typ_fold_subgr"/>
</dbReference>
<dbReference type="NCBIfam" id="NF001099">
    <property type="entry name" value="PRK00132.1"/>
    <property type="match status" value="1"/>
</dbReference>
<dbReference type="PANTHER" id="PTHR21569">
    <property type="entry name" value="RIBOSOMAL PROTEIN S9"/>
    <property type="match status" value="1"/>
</dbReference>
<dbReference type="PANTHER" id="PTHR21569:SF1">
    <property type="entry name" value="SMALL RIBOSOMAL SUBUNIT PROTEIN US9M"/>
    <property type="match status" value="1"/>
</dbReference>
<dbReference type="Pfam" id="PF00380">
    <property type="entry name" value="Ribosomal_S9"/>
    <property type="match status" value="1"/>
</dbReference>
<dbReference type="SUPFAM" id="SSF54211">
    <property type="entry name" value="Ribosomal protein S5 domain 2-like"/>
    <property type="match status" value="1"/>
</dbReference>
<dbReference type="PROSITE" id="PS00360">
    <property type="entry name" value="RIBOSOMAL_S9"/>
    <property type="match status" value="1"/>
</dbReference>
<comment type="similarity">
    <text evidence="1">Belongs to the universal ribosomal protein uS9 family.</text>
</comment>
<name>RS9_PROMM</name>
<sequence length="135" mass="14714">MSSSNNSVVYWGTGRRKTSVARVRLVPGSGTITINGRPGDHYLNFNPAYLAAVKAPLQTLGLNEQYDVLVNVHGGGLTGQADAIKQGAARALCELSADNRKPLKTEGHLSRDPRAKERRKYGLKKARKAPQFSKR</sequence>
<feature type="chain" id="PRO_0000111389" description="Small ribosomal subunit protein uS9">
    <location>
        <begin position="1"/>
        <end position="135"/>
    </location>
</feature>
<feature type="region of interest" description="Disordered" evidence="2">
    <location>
        <begin position="96"/>
        <end position="135"/>
    </location>
</feature>
<feature type="compositionally biased region" description="Basic and acidic residues" evidence="2">
    <location>
        <begin position="97"/>
        <end position="115"/>
    </location>
</feature>
<feature type="compositionally biased region" description="Basic residues" evidence="2">
    <location>
        <begin position="116"/>
        <end position="135"/>
    </location>
</feature>
<organism>
    <name type="scientific">Prochlorococcus marinus (strain MIT 9313)</name>
    <dbReference type="NCBI Taxonomy" id="74547"/>
    <lineage>
        <taxon>Bacteria</taxon>
        <taxon>Bacillati</taxon>
        <taxon>Cyanobacteriota</taxon>
        <taxon>Cyanophyceae</taxon>
        <taxon>Synechococcales</taxon>
        <taxon>Prochlorococcaceae</taxon>
        <taxon>Prochlorococcus</taxon>
    </lineage>
</organism>
<gene>
    <name evidence="1" type="primary">rpsI</name>
    <name evidence="1" type="synonym">rps9</name>
    <name type="ordered locus">PMT_1759</name>
</gene>